<name>NTPP_RHOP2</name>
<proteinExistence type="inferred from homology"/>
<sequence length="202" mass="21366">MTLWLGPGPLVLASQSRARQALLSNAGIPFDAIPADIDERGIAKASGLSAPGEIAALLAQEKAAFVSNHHPGRLVLGADQTLALGARGFNKPADRNEAAKQLRELAGRRHELHAAIALVRNGVTLFADVSIARMTMRPLNDEEIAAYLDLAGDKATSSVGGYQVEGLGVHLFDGIHGDHFTILGLPLLPLLGFLRSQKLLAF</sequence>
<reference key="1">
    <citation type="submission" date="2006-01" db="EMBL/GenBank/DDBJ databases">
        <title>Complete sequence of Rhodopseudomonas palustris HaA2.</title>
        <authorList>
            <consortium name="US DOE Joint Genome Institute"/>
            <person name="Copeland A."/>
            <person name="Lucas S."/>
            <person name="Lapidus A."/>
            <person name="Barry K."/>
            <person name="Detter J.C."/>
            <person name="Glavina T."/>
            <person name="Hammon N."/>
            <person name="Israni S."/>
            <person name="Pitluck S."/>
            <person name="Chain P."/>
            <person name="Malfatti S."/>
            <person name="Shin M."/>
            <person name="Vergez L."/>
            <person name="Schmutz J."/>
            <person name="Larimer F."/>
            <person name="Land M."/>
            <person name="Hauser L."/>
            <person name="Pelletier D.A."/>
            <person name="Kyrpides N."/>
            <person name="Anderson I."/>
            <person name="Oda Y."/>
            <person name="Harwood C.S."/>
            <person name="Richardson P."/>
        </authorList>
    </citation>
    <scope>NUCLEOTIDE SEQUENCE [LARGE SCALE GENOMIC DNA]</scope>
    <source>
        <strain>HaA2</strain>
    </source>
</reference>
<gene>
    <name type="ordered locus">RPB_0396</name>
</gene>
<evidence type="ECO:0000255" key="1">
    <source>
        <dbReference type="HAMAP-Rule" id="MF_00528"/>
    </source>
</evidence>
<comment type="function">
    <text evidence="1">Nucleoside triphosphate pyrophosphatase. May have a dual role in cell division arrest and in preventing the incorporation of modified nucleotides into cellular nucleic acids.</text>
</comment>
<comment type="catalytic activity">
    <reaction evidence="1">
        <text>a ribonucleoside 5'-triphosphate + H2O = a ribonucleoside 5'-phosphate + diphosphate + H(+)</text>
        <dbReference type="Rhea" id="RHEA:23996"/>
        <dbReference type="ChEBI" id="CHEBI:15377"/>
        <dbReference type="ChEBI" id="CHEBI:15378"/>
        <dbReference type="ChEBI" id="CHEBI:33019"/>
        <dbReference type="ChEBI" id="CHEBI:58043"/>
        <dbReference type="ChEBI" id="CHEBI:61557"/>
        <dbReference type="EC" id="3.6.1.9"/>
    </reaction>
</comment>
<comment type="catalytic activity">
    <reaction evidence="1">
        <text>a 2'-deoxyribonucleoside 5'-triphosphate + H2O = a 2'-deoxyribonucleoside 5'-phosphate + diphosphate + H(+)</text>
        <dbReference type="Rhea" id="RHEA:44644"/>
        <dbReference type="ChEBI" id="CHEBI:15377"/>
        <dbReference type="ChEBI" id="CHEBI:15378"/>
        <dbReference type="ChEBI" id="CHEBI:33019"/>
        <dbReference type="ChEBI" id="CHEBI:61560"/>
        <dbReference type="ChEBI" id="CHEBI:65317"/>
        <dbReference type="EC" id="3.6.1.9"/>
    </reaction>
</comment>
<comment type="cofactor">
    <cofactor evidence="1">
        <name>a divalent metal cation</name>
        <dbReference type="ChEBI" id="CHEBI:60240"/>
    </cofactor>
</comment>
<comment type="subcellular location">
    <subcellularLocation>
        <location evidence="1">Cytoplasm</location>
    </subcellularLocation>
</comment>
<comment type="similarity">
    <text evidence="1">Belongs to the Maf family.</text>
</comment>
<dbReference type="EC" id="3.6.1.9" evidence="1"/>
<dbReference type="EMBL" id="CP000250">
    <property type="protein sequence ID" value="ABD05107.1"/>
    <property type="molecule type" value="Genomic_DNA"/>
</dbReference>
<dbReference type="RefSeq" id="WP_011439297.1">
    <property type="nucleotide sequence ID" value="NC_007778.1"/>
</dbReference>
<dbReference type="SMR" id="Q2J353"/>
<dbReference type="STRING" id="316058.RPB_0396"/>
<dbReference type="KEGG" id="rpb:RPB_0396"/>
<dbReference type="eggNOG" id="COG0424">
    <property type="taxonomic scope" value="Bacteria"/>
</dbReference>
<dbReference type="HOGENOM" id="CLU_040416_1_1_5"/>
<dbReference type="OrthoDB" id="9813962at2"/>
<dbReference type="Proteomes" id="UP000008809">
    <property type="component" value="Chromosome"/>
</dbReference>
<dbReference type="GO" id="GO:0005737">
    <property type="term" value="C:cytoplasm"/>
    <property type="evidence" value="ECO:0007669"/>
    <property type="project" value="UniProtKB-SubCell"/>
</dbReference>
<dbReference type="GO" id="GO:0047429">
    <property type="term" value="F:nucleoside triphosphate diphosphatase activity"/>
    <property type="evidence" value="ECO:0007669"/>
    <property type="project" value="UniProtKB-EC"/>
</dbReference>
<dbReference type="GO" id="GO:0009117">
    <property type="term" value="P:nucleotide metabolic process"/>
    <property type="evidence" value="ECO:0007669"/>
    <property type="project" value="UniProtKB-KW"/>
</dbReference>
<dbReference type="CDD" id="cd00555">
    <property type="entry name" value="Maf"/>
    <property type="match status" value="1"/>
</dbReference>
<dbReference type="Gene3D" id="3.90.950.10">
    <property type="match status" value="1"/>
</dbReference>
<dbReference type="HAMAP" id="MF_00528">
    <property type="entry name" value="Maf"/>
    <property type="match status" value="1"/>
</dbReference>
<dbReference type="InterPro" id="IPR029001">
    <property type="entry name" value="ITPase-like_fam"/>
</dbReference>
<dbReference type="InterPro" id="IPR003697">
    <property type="entry name" value="Maf-like"/>
</dbReference>
<dbReference type="PANTHER" id="PTHR43213">
    <property type="entry name" value="BIFUNCTIONAL DTTP/UTP PYROPHOSPHATASE/METHYLTRANSFERASE PROTEIN-RELATED"/>
    <property type="match status" value="1"/>
</dbReference>
<dbReference type="PANTHER" id="PTHR43213:SF5">
    <property type="entry name" value="BIFUNCTIONAL DTTP_UTP PYROPHOSPHATASE_METHYLTRANSFERASE PROTEIN-RELATED"/>
    <property type="match status" value="1"/>
</dbReference>
<dbReference type="Pfam" id="PF02545">
    <property type="entry name" value="Maf"/>
    <property type="match status" value="1"/>
</dbReference>
<dbReference type="PIRSF" id="PIRSF006305">
    <property type="entry name" value="Maf"/>
    <property type="match status" value="1"/>
</dbReference>
<dbReference type="SUPFAM" id="SSF52972">
    <property type="entry name" value="ITPase-like"/>
    <property type="match status" value="1"/>
</dbReference>
<keyword id="KW-0963">Cytoplasm</keyword>
<keyword id="KW-0378">Hydrolase</keyword>
<keyword id="KW-0546">Nucleotide metabolism</keyword>
<keyword id="KW-1185">Reference proteome</keyword>
<accession>Q2J353</accession>
<protein>
    <recommendedName>
        <fullName evidence="1">Nucleoside triphosphate pyrophosphatase</fullName>
        <ecNumber evidence="1">3.6.1.9</ecNumber>
    </recommendedName>
    <alternativeName>
        <fullName evidence="1">Nucleotide pyrophosphatase</fullName>
        <shortName evidence="1">Nucleotide PPase</shortName>
    </alternativeName>
</protein>
<organism>
    <name type="scientific">Rhodopseudomonas palustris (strain HaA2)</name>
    <dbReference type="NCBI Taxonomy" id="316058"/>
    <lineage>
        <taxon>Bacteria</taxon>
        <taxon>Pseudomonadati</taxon>
        <taxon>Pseudomonadota</taxon>
        <taxon>Alphaproteobacteria</taxon>
        <taxon>Hyphomicrobiales</taxon>
        <taxon>Nitrobacteraceae</taxon>
        <taxon>Rhodopseudomonas</taxon>
    </lineage>
</organism>
<feature type="chain" id="PRO_0000267406" description="Nucleoside triphosphate pyrophosphatase">
    <location>
        <begin position="1"/>
        <end position="202"/>
    </location>
</feature>
<feature type="active site" description="Proton acceptor" evidence="1">
    <location>
        <position position="79"/>
    </location>
</feature>